<reference key="1">
    <citation type="journal article" date="2010" name="Genome Biol.">
        <title>Structure and dynamics of the pan-genome of Streptococcus pneumoniae and closely related species.</title>
        <authorList>
            <person name="Donati C."/>
            <person name="Hiller N.L."/>
            <person name="Tettelin H."/>
            <person name="Muzzi A."/>
            <person name="Croucher N.J."/>
            <person name="Angiuoli S.V."/>
            <person name="Oggioni M."/>
            <person name="Dunning Hotopp J.C."/>
            <person name="Hu F.Z."/>
            <person name="Riley D.R."/>
            <person name="Covacci A."/>
            <person name="Mitchell T.J."/>
            <person name="Bentley S.D."/>
            <person name="Kilian M."/>
            <person name="Ehrlich G.D."/>
            <person name="Rappuoli R."/>
            <person name="Moxon E.R."/>
            <person name="Masignani V."/>
        </authorList>
    </citation>
    <scope>NUCLEOTIDE SEQUENCE [LARGE SCALE GENOMIC DNA]</scope>
    <source>
        <strain>P1031</strain>
    </source>
</reference>
<proteinExistence type="inferred from homology"/>
<comment type="function">
    <text evidence="1">One of the primary rRNA binding proteins, this protein initially binds near the 5'-end of the 23S rRNA. It is important during the early stages of 50S assembly. It makes multiple contacts with different domains of the 23S rRNA in the assembled 50S subunit and ribosome.</text>
</comment>
<comment type="function">
    <text evidence="1">Forms part of the polypeptide exit tunnel.</text>
</comment>
<comment type="subunit">
    <text evidence="1">Part of the 50S ribosomal subunit.</text>
</comment>
<comment type="similarity">
    <text evidence="1">Belongs to the universal ribosomal protein uL4 family.</text>
</comment>
<accession>C1CI98</accession>
<name>RL4_STRZP</name>
<gene>
    <name evidence="1" type="primary">rplD</name>
    <name type="ordered locus">SPP_0261</name>
</gene>
<protein>
    <recommendedName>
        <fullName evidence="1">Large ribosomal subunit protein uL4</fullName>
    </recommendedName>
    <alternativeName>
        <fullName evidence="3">50S ribosomal protein L4</fullName>
    </alternativeName>
</protein>
<sequence>MANVTLFDQTGKEAGQVVLSDAVFGIEPNESVVFDVIISQRASLRQGTHAVKNRSAVSGGGRKPWRQKGTGRARQGSIRSPQWRGGGVVFGPTPRSYGYKLPQKVRRLALKSVYSEKVAENKFVAVDALSFTAPKTAEFAKVLAALSIDSKVLVILEEGNEFAALSARNLPNVKVATATTASVLDIANSDKLLVTQAAISKIEEVLA</sequence>
<evidence type="ECO:0000255" key="1">
    <source>
        <dbReference type="HAMAP-Rule" id="MF_01328"/>
    </source>
</evidence>
<evidence type="ECO:0000256" key="2">
    <source>
        <dbReference type="SAM" id="MobiDB-lite"/>
    </source>
</evidence>
<evidence type="ECO:0000305" key="3"/>
<dbReference type="EMBL" id="CP000920">
    <property type="protein sequence ID" value="ACO21483.1"/>
    <property type="molecule type" value="Genomic_DNA"/>
</dbReference>
<dbReference type="RefSeq" id="WP_000024543.1">
    <property type="nucleotide sequence ID" value="NC_012467.1"/>
</dbReference>
<dbReference type="SMR" id="C1CI98"/>
<dbReference type="GeneID" id="45652308"/>
<dbReference type="KEGG" id="spp:SPP_0261"/>
<dbReference type="HOGENOM" id="CLU_041575_5_2_9"/>
<dbReference type="GO" id="GO:1990904">
    <property type="term" value="C:ribonucleoprotein complex"/>
    <property type="evidence" value="ECO:0007669"/>
    <property type="project" value="UniProtKB-KW"/>
</dbReference>
<dbReference type="GO" id="GO:0005840">
    <property type="term" value="C:ribosome"/>
    <property type="evidence" value="ECO:0007669"/>
    <property type="project" value="UniProtKB-KW"/>
</dbReference>
<dbReference type="GO" id="GO:0019843">
    <property type="term" value="F:rRNA binding"/>
    <property type="evidence" value="ECO:0007669"/>
    <property type="project" value="UniProtKB-UniRule"/>
</dbReference>
<dbReference type="GO" id="GO:0003735">
    <property type="term" value="F:structural constituent of ribosome"/>
    <property type="evidence" value="ECO:0007669"/>
    <property type="project" value="InterPro"/>
</dbReference>
<dbReference type="GO" id="GO:0006412">
    <property type="term" value="P:translation"/>
    <property type="evidence" value="ECO:0007669"/>
    <property type="project" value="UniProtKB-UniRule"/>
</dbReference>
<dbReference type="FunFam" id="3.40.1370.10:FF:000003">
    <property type="entry name" value="50S ribosomal protein L4"/>
    <property type="match status" value="1"/>
</dbReference>
<dbReference type="Gene3D" id="3.40.1370.10">
    <property type="match status" value="1"/>
</dbReference>
<dbReference type="HAMAP" id="MF_01328_B">
    <property type="entry name" value="Ribosomal_uL4_B"/>
    <property type="match status" value="1"/>
</dbReference>
<dbReference type="InterPro" id="IPR002136">
    <property type="entry name" value="Ribosomal_uL4"/>
</dbReference>
<dbReference type="InterPro" id="IPR013005">
    <property type="entry name" value="Ribosomal_uL4-like"/>
</dbReference>
<dbReference type="InterPro" id="IPR023574">
    <property type="entry name" value="Ribosomal_uL4_dom_sf"/>
</dbReference>
<dbReference type="NCBIfam" id="TIGR03953">
    <property type="entry name" value="rplD_bact"/>
    <property type="match status" value="1"/>
</dbReference>
<dbReference type="PANTHER" id="PTHR10746">
    <property type="entry name" value="50S RIBOSOMAL PROTEIN L4"/>
    <property type="match status" value="1"/>
</dbReference>
<dbReference type="PANTHER" id="PTHR10746:SF6">
    <property type="entry name" value="LARGE RIBOSOMAL SUBUNIT PROTEIN UL4M"/>
    <property type="match status" value="1"/>
</dbReference>
<dbReference type="Pfam" id="PF00573">
    <property type="entry name" value="Ribosomal_L4"/>
    <property type="match status" value="1"/>
</dbReference>
<dbReference type="SUPFAM" id="SSF52166">
    <property type="entry name" value="Ribosomal protein L4"/>
    <property type="match status" value="1"/>
</dbReference>
<keyword id="KW-0687">Ribonucleoprotein</keyword>
<keyword id="KW-0689">Ribosomal protein</keyword>
<keyword id="KW-0694">RNA-binding</keyword>
<keyword id="KW-0699">rRNA-binding</keyword>
<feature type="chain" id="PRO_1000166030" description="Large ribosomal subunit protein uL4">
    <location>
        <begin position="1"/>
        <end position="207"/>
    </location>
</feature>
<feature type="region of interest" description="Disordered" evidence="2">
    <location>
        <begin position="49"/>
        <end position="78"/>
    </location>
</feature>
<organism>
    <name type="scientific">Streptococcus pneumoniae (strain P1031)</name>
    <dbReference type="NCBI Taxonomy" id="488223"/>
    <lineage>
        <taxon>Bacteria</taxon>
        <taxon>Bacillati</taxon>
        <taxon>Bacillota</taxon>
        <taxon>Bacilli</taxon>
        <taxon>Lactobacillales</taxon>
        <taxon>Streptococcaceae</taxon>
        <taxon>Streptococcus</taxon>
    </lineage>
</organism>